<accession>Q54LS2</accession>
<reference key="1">
    <citation type="journal article" date="2005" name="Nature">
        <title>The genome of the social amoeba Dictyostelium discoideum.</title>
        <authorList>
            <person name="Eichinger L."/>
            <person name="Pachebat J.A."/>
            <person name="Gloeckner G."/>
            <person name="Rajandream M.A."/>
            <person name="Sucgang R."/>
            <person name="Berriman M."/>
            <person name="Song J."/>
            <person name="Olsen R."/>
            <person name="Szafranski K."/>
            <person name="Xu Q."/>
            <person name="Tunggal B."/>
            <person name="Kummerfeld S."/>
            <person name="Madera M."/>
            <person name="Konfortov B.A."/>
            <person name="Rivero F."/>
            <person name="Bankier A.T."/>
            <person name="Lehmann R."/>
            <person name="Hamlin N."/>
            <person name="Davies R."/>
            <person name="Gaudet P."/>
            <person name="Fey P."/>
            <person name="Pilcher K."/>
            <person name="Chen G."/>
            <person name="Saunders D."/>
            <person name="Sodergren E.J."/>
            <person name="Davis P."/>
            <person name="Kerhornou A."/>
            <person name="Nie X."/>
            <person name="Hall N."/>
            <person name="Anjard C."/>
            <person name="Hemphill L."/>
            <person name="Bason N."/>
            <person name="Farbrother P."/>
            <person name="Desany B."/>
            <person name="Just E."/>
            <person name="Morio T."/>
            <person name="Rost R."/>
            <person name="Churcher C.M."/>
            <person name="Cooper J."/>
            <person name="Haydock S."/>
            <person name="van Driessche N."/>
            <person name="Cronin A."/>
            <person name="Goodhead I."/>
            <person name="Muzny D.M."/>
            <person name="Mourier T."/>
            <person name="Pain A."/>
            <person name="Lu M."/>
            <person name="Harper D."/>
            <person name="Lindsay R."/>
            <person name="Hauser H."/>
            <person name="James K.D."/>
            <person name="Quiles M."/>
            <person name="Madan Babu M."/>
            <person name="Saito T."/>
            <person name="Buchrieser C."/>
            <person name="Wardroper A."/>
            <person name="Felder M."/>
            <person name="Thangavelu M."/>
            <person name="Johnson D."/>
            <person name="Knights A."/>
            <person name="Loulseged H."/>
            <person name="Mungall K.L."/>
            <person name="Oliver K."/>
            <person name="Price C."/>
            <person name="Quail M.A."/>
            <person name="Urushihara H."/>
            <person name="Hernandez J."/>
            <person name="Rabbinowitsch E."/>
            <person name="Steffen D."/>
            <person name="Sanders M."/>
            <person name="Ma J."/>
            <person name="Kohara Y."/>
            <person name="Sharp S."/>
            <person name="Simmonds M.N."/>
            <person name="Spiegler S."/>
            <person name="Tivey A."/>
            <person name="Sugano S."/>
            <person name="White B."/>
            <person name="Walker D."/>
            <person name="Woodward J.R."/>
            <person name="Winckler T."/>
            <person name="Tanaka Y."/>
            <person name="Shaulsky G."/>
            <person name="Schleicher M."/>
            <person name="Weinstock G.M."/>
            <person name="Rosenthal A."/>
            <person name="Cox E.C."/>
            <person name="Chisholm R.L."/>
            <person name="Gibbs R.A."/>
            <person name="Loomis W.F."/>
            <person name="Platzer M."/>
            <person name="Kay R.R."/>
            <person name="Williams J.G."/>
            <person name="Dear P.H."/>
            <person name="Noegel A.A."/>
            <person name="Barrell B.G."/>
            <person name="Kuspa A."/>
        </authorList>
    </citation>
    <scope>NUCLEOTIDE SEQUENCE [LARGE SCALE GENOMIC DNA]</scope>
    <source>
        <strain>AX4</strain>
    </source>
</reference>
<feature type="chain" id="PRO_0000328107" description="Probable prefoldin subunit 3">
    <location>
        <begin position="1"/>
        <end position="195"/>
    </location>
</feature>
<comment type="function">
    <text evidence="1">Binds specifically to cytosolic chaperonin (c-CPN) and transfers target proteins to it. Binds to nascent polypeptide chain and promotes folding in an environment in which there are many competing pathways for nonnative proteins (By similarity).</text>
</comment>
<comment type="subunit">
    <text evidence="1">Heterohexamer of two PFD-alpha type and four PFD-beta type subunits.</text>
</comment>
<comment type="similarity">
    <text evidence="2">Belongs to the prefoldin subunit alpha family.</text>
</comment>
<protein>
    <recommendedName>
        <fullName>Probable prefoldin subunit 3</fullName>
    </recommendedName>
</protein>
<gene>
    <name type="primary">pfdn3</name>
    <name type="ORF">DDB_G0286473</name>
</gene>
<proteinExistence type="inferred from homology"/>
<sequence>MATITNADPYKILFEQDIKTATNIPMVTFISNVEEFVKDKDVENVFKQLQEAYQKYKFFESKLSNNISMLTQRSKQLQESLDIVDHVENKSNESFSVQYELSEGVYSSAQVNEPKSIYLWLGANVMLEYSFEEAREVLRKNKDTVDRQLSESIQDLGFVKDQITTTDVNVSRVYNYDIIQKRKLKLSGKTEEEEK</sequence>
<name>PFD3_DICDI</name>
<evidence type="ECO:0000250" key="1"/>
<evidence type="ECO:0000305" key="2"/>
<keyword id="KW-0143">Chaperone</keyword>
<keyword id="KW-1185">Reference proteome</keyword>
<organism>
    <name type="scientific">Dictyostelium discoideum</name>
    <name type="common">Social amoeba</name>
    <dbReference type="NCBI Taxonomy" id="44689"/>
    <lineage>
        <taxon>Eukaryota</taxon>
        <taxon>Amoebozoa</taxon>
        <taxon>Evosea</taxon>
        <taxon>Eumycetozoa</taxon>
        <taxon>Dictyostelia</taxon>
        <taxon>Dictyosteliales</taxon>
        <taxon>Dictyosteliaceae</taxon>
        <taxon>Dictyostelium</taxon>
    </lineage>
</organism>
<dbReference type="EMBL" id="AAFI02000085">
    <property type="protein sequence ID" value="EAL64261.1"/>
    <property type="molecule type" value="Genomic_DNA"/>
</dbReference>
<dbReference type="RefSeq" id="XP_637758.1">
    <property type="nucleotide sequence ID" value="XM_632666.1"/>
</dbReference>
<dbReference type="SMR" id="Q54LS2"/>
<dbReference type="FunCoup" id="Q54LS2">
    <property type="interactions" value="881"/>
</dbReference>
<dbReference type="STRING" id="44689.Q54LS2"/>
<dbReference type="PaxDb" id="44689-DDB0237722"/>
<dbReference type="EnsemblProtists" id="EAL64261">
    <property type="protein sequence ID" value="EAL64261"/>
    <property type="gene ID" value="DDB_G0286473"/>
</dbReference>
<dbReference type="GeneID" id="8625624"/>
<dbReference type="KEGG" id="ddi:DDB_G0286473"/>
<dbReference type="dictyBase" id="DDB_G0286473">
    <property type="gene designation" value="pfdn3"/>
</dbReference>
<dbReference type="VEuPathDB" id="AmoebaDB:DDB_G0286473"/>
<dbReference type="eggNOG" id="KOG3313">
    <property type="taxonomic scope" value="Eukaryota"/>
</dbReference>
<dbReference type="HOGENOM" id="CLU_083737_1_0_1"/>
<dbReference type="InParanoid" id="Q54LS2"/>
<dbReference type="OMA" id="YNYDVHQ"/>
<dbReference type="PhylomeDB" id="Q54LS2"/>
<dbReference type="PRO" id="PR:Q54LS2"/>
<dbReference type="Proteomes" id="UP000002195">
    <property type="component" value="Chromosome 4"/>
</dbReference>
<dbReference type="GO" id="GO:0005737">
    <property type="term" value="C:cytoplasm"/>
    <property type="evidence" value="ECO:0000318"/>
    <property type="project" value="GO_Central"/>
</dbReference>
<dbReference type="GO" id="GO:0016272">
    <property type="term" value="C:prefoldin complex"/>
    <property type="evidence" value="ECO:0000318"/>
    <property type="project" value="GO_Central"/>
</dbReference>
<dbReference type="GO" id="GO:0015631">
    <property type="term" value="F:tubulin binding"/>
    <property type="evidence" value="ECO:0000318"/>
    <property type="project" value="GO_Central"/>
</dbReference>
<dbReference type="GO" id="GO:0007017">
    <property type="term" value="P:microtubule-based process"/>
    <property type="evidence" value="ECO:0000318"/>
    <property type="project" value="GO_Central"/>
</dbReference>
<dbReference type="GO" id="GO:0006457">
    <property type="term" value="P:protein folding"/>
    <property type="evidence" value="ECO:0007669"/>
    <property type="project" value="InterPro"/>
</dbReference>
<dbReference type="GO" id="GO:0007021">
    <property type="term" value="P:tubulin complex assembly"/>
    <property type="evidence" value="ECO:0000318"/>
    <property type="project" value="GO_Central"/>
</dbReference>
<dbReference type="CDD" id="cd23156">
    <property type="entry name" value="Prefoldin_3"/>
    <property type="match status" value="1"/>
</dbReference>
<dbReference type="FunFam" id="1.10.287.370:FF:000043">
    <property type="entry name" value="Prefoldin subunit 3"/>
    <property type="match status" value="1"/>
</dbReference>
<dbReference type="Gene3D" id="1.10.287.370">
    <property type="match status" value="1"/>
</dbReference>
<dbReference type="InterPro" id="IPR016655">
    <property type="entry name" value="PFD3"/>
</dbReference>
<dbReference type="InterPro" id="IPR009053">
    <property type="entry name" value="Prefoldin"/>
</dbReference>
<dbReference type="InterPro" id="IPR004127">
    <property type="entry name" value="Prefoldin_subunit_alpha"/>
</dbReference>
<dbReference type="PANTHER" id="PTHR12409">
    <property type="entry name" value="PREFOLDIN SUBUNIT 3"/>
    <property type="match status" value="1"/>
</dbReference>
<dbReference type="PANTHER" id="PTHR12409:SF0">
    <property type="entry name" value="PREFOLDIN SUBUNIT 3"/>
    <property type="match status" value="1"/>
</dbReference>
<dbReference type="Pfam" id="PF02996">
    <property type="entry name" value="Prefoldin"/>
    <property type="match status" value="1"/>
</dbReference>
<dbReference type="PIRSF" id="PIRSF016396">
    <property type="entry name" value="Prefoldin_subunit_3"/>
    <property type="match status" value="1"/>
</dbReference>
<dbReference type="SUPFAM" id="SSF46579">
    <property type="entry name" value="Prefoldin"/>
    <property type="match status" value="1"/>
</dbReference>